<accession>F7EC58</accession>
<accession>B1H185</accession>
<dbReference type="EMBL" id="AAMC01036115">
    <property type="status" value="NOT_ANNOTATED_CDS"/>
    <property type="molecule type" value="Genomic_DNA"/>
</dbReference>
<dbReference type="EMBL" id="AAMC01036116">
    <property type="status" value="NOT_ANNOTATED_CDS"/>
    <property type="molecule type" value="Genomic_DNA"/>
</dbReference>
<dbReference type="EMBL" id="BC160513">
    <property type="protein sequence ID" value="AAI60513.1"/>
    <property type="molecule type" value="mRNA"/>
</dbReference>
<dbReference type="RefSeq" id="NP_001120266.1">
    <property type="nucleotide sequence ID" value="NM_001126794.1"/>
</dbReference>
<dbReference type="RefSeq" id="XP_012811931.1">
    <property type="nucleotide sequence ID" value="XM_012956477.1"/>
</dbReference>
<dbReference type="SMR" id="F7EC58"/>
<dbReference type="FunCoup" id="F7EC58">
    <property type="interactions" value="602"/>
</dbReference>
<dbReference type="STRING" id="8364.ENSXETP00000003683"/>
<dbReference type="PaxDb" id="8364-ENSXETP00000044617"/>
<dbReference type="GeneID" id="100145319"/>
<dbReference type="KEGG" id="xtr:100145319"/>
<dbReference type="CTD" id="65979"/>
<dbReference type="eggNOG" id="KOG4339">
    <property type="taxonomic scope" value="Eukaryota"/>
</dbReference>
<dbReference type="HOGENOM" id="CLU_015753_1_0_1"/>
<dbReference type="InParanoid" id="F7EC58"/>
<dbReference type="OrthoDB" id="5563016at2759"/>
<dbReference type="TreeFam" id="TF316316"/>
<dbReference type="Proteomes" id="UP000008143">
    <property type="component" value="Chromosome 2"/>
</dbReference>
<dbReference type="GO" id="GO:0005737">
    <property type="term" value="C:cytoplasm"/>
    <property type="evidence" value="ECO:0007669"/>
    <property type="project" value="UniProtKB-SubCell"/>
</dbReference>
<dbReference type="GO" id="GO:0030027">
    <property type="term" value="C:lamellipodium"/>
    <property type="evidence" value="ECO:0000250"/>
    <property type="project" value="UniProtKB"/>
</dbReference>
<dbReference type="GO" id="GO:0003779">
    <property type="term" value="F:actin binding"/>
    <property type="evidence" value="ECO:0000250"/>
    <property type="project" value="UniProtKB"/>
</dbReference>
<dbReference type="GO" id="GO:0008157">
    <property type="term" value="F:protein phosphatase 1 binding"/>
    <property type="evidence" value="ECO:0000250"/>
    <property type="project" value="UniProtKB"/>
</dbReference>
<dbReference type="GO" id="GO:0072542">
    <property type="term" value="F:protein phosphatase activator activity"/>
    <property type="evidence" value="ECO:0000250"/>
    <property type="project" value="UniProtKB"/>
</dbReference>
<dbReference type="GO" id="GO:0030036">
    <property type="term" value="P:actin cytoskeleton organization"/>
    <property type="evidence" value="ECO:0000250"/>
    <property type="project" value="UniProtKB"/>
</dbReference>
<dbReference type="GO" id="GO:0061386">
    <property type="term" value="P:closure of optic fissure"/>
    <property type="evidence" value="ECO:0000250"/>
    <property type="project" value="UniProtKB"/>
</dbReference>
<dbReference type="GO" id="GO:0048484">
    <property type="term" value="P:enteric nervous system development"/>
    <property type="evidence" value="ECO:0000250"/>
    <property type="project" value="UniProtKB"/>
</dbReference>
<dbReference type="GO" id="GO:2001045">
    <property type="term" value="P:negative regulation of integrin-mediated signaling pathway"/>
    <property type="evidence" value="ECO:0000250"/>
    <property type="project" value="UniProtKB"/>
</dbReference>
<dbReference type="GO" id="GO:0001755">
    <property type="term" value="P:neural crest cell migration"/>
    <property type="evidence" value="ECO:0000250"/>
    <property type="project" value="UniProtKB"/>
</dbReference>
<dbReference type="GO" id="GO:0001843">
    <property type="term" value="P:neural tube closure"/>
    <property type="evidence" value="ECO:0000250"/>
    <property type="project" value="UniProtKB"/>
</dbReference>
<dbReference type="GO" id="GO:0043085">
    <property type="term" value="P:positive regulation of catalytic activity"/>
    <property type="evidence" value="ECO:0000250"/>
    <property type="project" value="UniProtKB"/>
</dbReference>
<dbReference type="GO" id="GO:0051726">
    <property type="term" value="P:regulation of cell cycle"/>
    <property type="evidence" value="ECO:0000250"/>
    <property type="project" value="UniProtKB"/>
</dbReference>
<dbReference type="GO" id="GO:0007266">
    <property type="term" value="P:Rho protein signal transduction"/>
    <property type="evidence" value="ECO:0000250"/>
    <property type="project" value="UniProtKB"/>
</dbReference>
<dbReference type="Gene3D" id="6.10.140.1750">
    <property type="match status" value="1"/>
</dbReference>
<dbReference type="Gene3D" id="6.10.140.2130">
    <property type="match status" value="1"/>
</dbReference>
<dbReference type="InterPro" id="IPR004018">
    <property type="entry name" value="RPEL_repeat"/>
</dbReference>
<dbReference type="PANTHER" id="PTHR12751:SF4">
    <property type="entry name" value="PHOSPHATASE AND ACTIN REGULATOR 4"/>
    <property type="match status" value="1"/>
</dbReference>
<dbReference type="PANTHER" id="PTHR12751">
    <property type="entry name" value="PHOSPHATASE AND ACTIN REGULATOR PHACTR"/>
    <property type="match status" value="1"/>
</dbReference>
<dbReference type="Pfam" id="PF02755">
    <property type="entry name" value="RPEL"/>
    <property type="match status" value="3"/>
</dbReference>
<dbReference type="SMART" id="SM00707">
    <property type="entry name" value="RPEL"/>
    <property type="match status" value="3"/>
</dbReference>
<dbReference type="PROSITE" id="PS51073">
    <property type="entry name" value="RPEL"/>
    <property type="match status" value="3"/>
</dbReference>
<gene>
    <name type="primary">phactr4</name>
</gene>
<reference key="1">
    <citation type="journal article" date="2010" name="Science">
        <title>The genome of the Western clawed frog Xenopus tropicalis.</title>
        <authorList>
            <person name="Hellsten U."/>
            <person name="Harland R.M."/>
            <person name="Gilchrist M.J."/>
            <person name="Hendrix D."/>
            <person name="Jurka J."/>
            <person name="Kapitonov V."/>
            <person name="Ovcharenko I."/>
            <person name="Putnam N.H."/>
            <person name="Shu S."/>
            <person name="Taher L."/>
            <person name="Blitz I.L."/>
            <person name="Blumberg B."/>
            <person name="Dichmann D.S."/>
            <person name="Dubchak I."/>
            <person name="Amaya E."/>
            <person name="Detter J.C."/>
            <person name="Fletcher R."/>
            <person name="Gerhard D.S."/>
            <person name="Goodstein D."/>
            <person name="Graves T."/>
            <person name="Grigoriev I.V."/>
            <person name="Grimwood J."/>
            <person name="Kawashima T."/>
            <person name="Lindquist E."/>
            <person name="Lucas S.M."/>
            <person name="Mead P.E."/>
            <person name="Mitros T."/>
            <person name="Ogino H."/>
            <person name="Ohta Y."/>
            <person name="Poliakov A.V."/>
            <person name="Pollet N."/>
            <person name="Robert J."/>
            <person name="Salamov A."/>
            <person name="Sater A.K."/>
            <person name="Schmutz J."/>
            <person name="Terry A."/>
            <person name="Vize P.D."/>
            <person name="Warren W.C."/>
            <person name="Wells D."/>
            <person name="Wills A."/>
            <person name="Wilson R.K."/>
            <person name="Zimmerman L.B."/>
            <person name="Zorn A.M."/>
            <person name="Grainger R."/>
            <person name="Grammer T."/>
            <person name="Khokha M.K."/>
            <person name="Richardson P.M."/>
            <person name="Rokhsar D.S."/>
        </authorList>
    </citation>
    <scope>NUCLEOTIDE SEQUENCE [LARGE SCALE GENOMIC DNA]</scope>
</reference>
<reference key="2">
    <citation type="submission" date="2008-03" db="EMBL/GenBank/DDBJ databases">
        <authorList>
            <consortium name="NIH - Xenopus Gene Collection (XGC) project"/>
        </authorList>
    </citation>
    <scope>NUCLEOTIDE SEQUENCE [LARGE SCALE MRNA]</scope>
    <source>
        <strain>N6</strain>
        <tissue>Intestine</tissue>
    </source>
</reference>
<name>PHAR4_XENTR</name>
<organism>
    <name type="scientific">Xenopus tropicalis</name>
    <name type="common">Western clawed frog</name>
    <name type="synonym">Silurana tropicalis</name>
    <dbReference type="NCBI Taxonomy" id="8364"/>
    <lineage>
        <taxon>Eukaryota</taxon>
        <taxon>Metazoa</taxon>
        <taxon>Chordata</taxon>
        <taxon>Craniata</taxon>
        <taxon>Vertebrata</taxon>
        <taxon>Euteleostomi</taxon>
        <taxon>Amphibia</taxon>
        <taxon>Batrachia</taxon>
        <taxon>Anura</taxon>
        <taxon>Pipoidea</taxon>
        <taxon>Pipidae</taxon>
        <taxon>Xenopodinae</taxon>
        <taxon>Xenopus</taxon>
        <taxon>Silurana</taxon>
    </lineage>
</organism>
<sequence>MPSAPSTPPSKRKSKFAGFGKFFKPWKWRKRKSSDSFRETSEVLERKISMRKPREELVKRGLLVEVPEEDVSIPSESPPLRNGHMSVEHANPPEDIGGLKRKTRQDSTGSRPKSGETTVQPCATAEVAPVEPCTATEVASVQPHATAEVAPIQPLATAEVSPVQHCATAEVAPVQPRPVSEVASVQPCPVSEVVPVHPRHLSEKNSEKYRPMSEVAPGASRPTSEVAPLQKVSRDFSKQPLLPPKRPLSSSSSVTQESVLGGQKPDPSTRQQSSVPVPTPRTIHPLPFSKQPPVPPPKPQNRSSNPLMAELSLALGGSTLSPAGSRPSPPIPPKRVVVPSTDAVNNKEKALRPASLPPIPANEISIPSPPSPPISSHIPVSNPPVPMLTLAPPNTEVEKEQSASPLPLHIRIQQALNSPQPLPLLDSSQRAQSLLFMQNEVPSEEGTRVRSLPVTIELLKVPDDDDDDNSLEDESLSPESSESHPSRVYIGDVPSVTVIPNYLPTCVQEEEEEEEEGVSDTDSEGPVLYREDDEEEEEEETSSLANKVKRKDTLAMKLSGRMGPHDSNPEFPQRSREEWNQIRQQIGSQLNRRLSQRPSAEELEQRNILQKNEADRLAEKKEIKRRLTRKLSQRPTVAELVERKILRFNEYVEVTDAHDYDRRADKPWTRLTPADKAAIRKELNEFKSTEMAVHEESKHFTRFHRP</sequence>
<evidence type="ECO:0000250" key="1"/>
<evidence type="ECO:0000256" key="2">
    <source>
        <dbReference type="SAM" id="MobiDB-lite"/>
    </source>
</evidence>
<evidence type="ECO:0000305" key="3"/>
<protein>
    <recommendedName>
        <fullName>Phosphatase and actin regulator 4</fullName>
    </recommendedName>
</protein>
<comment type="function">
    <text evidence="1">Regulator of protein phosphatase 1 (PP1) required for neural tube and optic fissure closure, and enteric neural crest cell (ENCCs) migration during development. Acts as an activator of PP1. During neural tube closure, localizes to the ventral neural tube and activates PP1, leading to down-regulate cell proliferation within cranial neural tissue and the neural retina. Also acts as a regulator of migration of enteric neural crest cells (ENCCs) by activating PP1, leading to repression of the integrin signaling through the rho/rock pathway (By similarity).</text>
</comment>
<comment type="subunit">
    <text evidence="1">Binds ppp1ca and actin.</text>
</comment>
<comment type="subcellular location">
    <subcellularLocation>
        <location evidence="1">Cytoplasm</location>
    </subcellularLocation>
    <subcellularLocation>
        <location evidence="1">Cell projection</location>
        <location evidence="1">Lamellipodium</location>
    </subcellularLocation>
</comment>
<comment type="similarity">
    <text evidence="3">Belongs to the phosphatase and actin regulator family.</text>
</comment>
<feature type="chain" id="PRO_0000416891" description="Phosphatase and actin regulator 4">
    <location>
        <begin position="1"/>
        <end position="706"/>
    </location>
</feature>
<feature type="repeat" description="RPEL 1">
    <location>
        <begin position="42"/>
        <end position="67"/>
    </location>
</feature>
<feature type="repeat" description="RPEL 2">
    <location>
        <begin position="588"/>
        <end position="613"/>
    </location>
</feature>
<feature type="repeat" description="RPEL 3">
    <location>
        <begin position="625"/>
        <end position="650"/>
    </location>
</feature>
<feature type="region of interest" description="Disordered" evidence="2">
    <location>
        <begin position="65"/>
        <end position="123"/>
    </location>
</feature>
<feature type="region of interest" description="Disordered" evidence="2">
    <location>
        <begin position="196"/>
        <end position="380"/>
    </location>
</feature>
<feature type="region of interest" description="Disordered" evidence="2">
    <location>
        <begin position="385"/>
        <end position="404"/>
    </location>
</feature>
<feature type="region of interest" description="Disordered" evidence="2">
    <location>
        <begin position="459"/>
        <end position="579"/>
    </location>
</feature>
<feature type="compositionally biased region" description="Polar residues" evidence="2">
    <location>
        <begin position="106"/>
        <end position="121"/>
    </location>
</feature>
<feature type="compositionally biased region" description="Basic and acidic residues" evidence="2">
    <location>
        <begin position="200"/>
        <end position="211"/>
    </location>
</feature>
<feature type="compositionally biased region" description="Polar residues" evidence="2">
    <location>
        <begin position="266"/>
        <end position="276"/>
    </location>
</feature>
<feature type="compositionally biased region" description="Pro residues" evidence="2">
    <location>
        <begin position="290"/>
        <end position="299"/>
    </location>
</feature>
<feature type="compositionally biased region" description="Acidic residues" evidence="2">
    <location>
        <begin position="463"/>
        <end position="476"/>
    </location>
</feature>
<feature type="compositionally biased region" description="Acidic residues" evidence="2">
    <location>
        <begin position="508"/>
        <end position="523"/>
    </location>
</feature>
<feature type="compositionally biased region" description="Acidic residues" evidence="2">
    <location>
        <begin position="531"/>
        <end position="541"/>
    </location>
</feature>
<feature type="compositionally biased region" description="Basic and acidic residues" evidence="2">
    <location>
        <begin position="563"/>
        <end position="579"/>
    </location>
</feature>
<feature type="sequence conflict" description="In Ref. 2; AAI60513." evidence="3" ref="2">
    <original>C</original>
    <variation>R</variation>
    <location>
        <position position="122"/>
    </location>
</feature>
<proteinExistence type="evidence at transcript level"/>
<keyword id="KW-0009">Actin-binding</keyword>
<keyword id="KW-0966">Cell projection</keyword>
<keyword id="KW-0963">Cytoplasm</keyword>
<keyword id="KW-0217">Developmental protein</keyword>
<keyword id="KW-0524">Neurogenesis</keyword>
<keyword id="KW-1185">Reference proteome</keyword>
<keyword id="KW-0677">Repeat</keyword>